<sequence length="349" mass="37266">MSEDYLDRDVSPALTVGEADIDVSLRPRSLREFIGQPRVREQLQLVIEGAKNRGATPDHILLSGPPGLGKTSLAMIIAAELGSSLRMTSGPALERAGDLAVMLSNLVEHDVLFIDEIHRIARPAEEMLYLAMEDFRVDVIVGKGPGATSIPLEVAPFTLVGATTRSGALTGPLRDRFGFTAHMDFYEPTELEGVLARAAGILGIELGVEAGAEIARRSRGTPRIANRLLRRVRDFAEVRADGVITRDVAKAALAVYDVDELGLDRLDRAVLSALTRSFGGGPVGVSTLAVAVGEEATTVEEVCEPFLVRAGMVARTPRGRVATAQAWTYLCMTPPVGVTGLSQPGLFES</sequence>
<name>RUVB_MYCLE</name>
<keyword id="KW-0067">ATP-binding</keyword>
<keyword id="KW-0963">Cytoplasm</keyword>
<keyword id="KW-0227">DNA damage</keyword>
<keyword id="KW-0233">DNA recombination</keyword>
<keyword id="KW-0234">DNA repair</keyword>
<keyword id="KW-0238">DNA-binding</keyword>
<keyword id="KW-0378">Hydrolase</keyword>
<keyword id="KW-0547">Nucleotide-binding</keyword>
<keyword id="KW-1185">Reference proteome</keyword>
<proteinExistence type="inferred from homology"/>
<reference key="1">
    <citation type="submission" date="1994-03" db="EMBL/GenBank/DDBJ databases">
        <authorList>
            <person name="Smith D.R."/>
            <person name="Robison K."/>
        </authorList>
    </citation>
    <scope>NUCLEOTIDE SEQUENCE [GENOMIC DNA]</scope>
</reference>
<reference key="2">
    <citation type="journal article" date="2001" name="Nature">
        <title>Massive gene decay in the leprosy bacillus.</title>
        <authorList>
            <person name="Cole S.T."/>
            <person name="Eiglmeier K."/>
            <person name="Parkhill J."/>
            <person name="James K.D."/>
            <person name="Thomson N.R."/>
            <person name="Wheeler P.R."/>
            <person name="Honore N."/>
            <person name="Garnier T."/>
            <person name="Churcher C.M."/>
            <person name="Harris D.E."/>
            <person name="Mungall K.L."/>
            <person name="Basham D."/>
            <person name="Brown D."/>
            <person name="Chillingworth T."/>
            <person name="Connor R."/>
            <person name="Davies R.M."/>
            <person name="Devlin K."/>
            <person name="Duthoy S."/>
            <person name="Feltwell T."/>
            <person name="Fraser A."/>
            <person name="Hamlin N."/>
            <person name="Holroyd S."/>
            <person name="Hornsby T."/>
            <person name="Jagels K."/>
            <person name="Lacroix C."/>
            <person name="Maclean J."/>
            <person name="Moule S."/>
            <person name="Murphy L.D."/>
            <person name="Oliver K."/>
            <person name="Quail M.A."/>
            <person name="Rajandream M.A."/>
            <person name="Rutherford K.M."/>
            <person name="Rutter S."/>
            <person name="Seeger K."/>
            <person name="Simon S."/>
            <person name="Simmonds M."/>
            <person name="Skelton J."/>
            <person name="Squares R."/>
            <person name="Squares S."/>
            <person name="Stevens K."/>
            <person name="Taylor K."/>
            <person name="Whitehead S."/>
            <person name="Woodward J.R."/>
            <person name="Barrell B.G."/>
        </authorList>
    </citation>
    <scope>NUCLEOTIDE SEQUENCE [LARGE SCALE GENOMIC DNA]</scope>
    <source>
        <strain>TN</strain>
    </source>
</reference>
<feature type="chain" id="PRO_0000165558" description="Holliday junction branch migration complex subunit RuvB">
    <location>
        <begin position="1"/>
        <end position="349"/>
    </location>
</feature>
<feature type="region of interest" description="Large ATPase domain (RuvB-L)" evidence="1">
    <location>
        <begin position="1"/>
        <end position="186"/>
    </location>
</feature>
<feature type="region of interest" description="Small ATPAse domain (RuvB-S)" evidence="1">
    <location>
        <begin position="187"/>
        <end position="257"/>
    </location>
</feature>
<feature type="region of interest" description="Head domain (RuvB-H)" evidence="1">
    <location>
        <begin position="260"/>
        <end position="349"/>
    </location>
</feature>
<feature type="binding site" evidence="1">
    <location>
        <position position="25"/>
    </location>
    <ligand>
        <name>ATP</name>
        <dbReference type="ChEBI" id="CHEBI:30616"/>
    </ligand>
</feature>
<feature type="binding site" evidence="1">
    <location>
        <position position="26"/>
    </location>
    <ligand>
        <name>ATP</name>
        <dbReference type="ChEBI" id="CHEBI:30616"/>
    </ligand>
</feature>
<feature type="binding site" evidence="1">
    <location>
        <position position="67"/>
    </location>
    <ligand>
        <name>ATP</name>
        <dbReference type="ChEBI" id="CHEBI:30616"/>
    </ligand>
</feature>
<feature type="binding site" evidence="1">
    <location>
        <position position="70"/>
    </location>
    <ligand>
        <name>ATP</name>
        <dbReference type="ChEBI" id="CHEBI:30616"/>
    </ligand>
</feature>
<feature type="binding site" evidence="1">
    <location>
        <position position="71"/>
    </location>
    <ligand>
        <name>ATP</name>
        <dbReference type="ChEBI" id="CHEBI:30616"/>
    </ligand>
</feature>
<feature type="binding site" evidence="1">
    <location>
        <position position="71"/>
    </location>
    <ligand>
        <name>Mg(2+)</name>
        <dbReference type="ChEBI" id="CHEBI:18420"/>
    </ligand>
</feature>
<feature type="binding site" evidence="1">
    <location>
        <position position="72"/>
    </location>
    <ligand>
        <name>ATP</name>
        <dbReference type="ChEBI" id="CHEBI:30616"/>
    </ligand>
</feature>
<feature type="binding site" evidence="1">
    <location>
        <begin position="133"/>
        <end position="135"/>
    </location>
    <ligand>
        <name>ATP</name>
        <dbReference type="ChEBI" id="CHEBI:30616"/>
    </ligand>
</feature>
<feature type="binding site" evidence="1">
    <location>
        <position position="176"/>
    </location>
    <ligand>
        <name>ATP</name>
        <dbReference type="ChEBI" id="CHEBI:30616"/>
    </ligand>
</feature>
<feature type="binding site" evidence="1">
    <location>
        <position position="186"/>
    </location>
    <ligand>
        <name>ATP</name>
        <dbReference type="ChEBI" id="CHEBI:30616"/>
    </ligand>
</feature>
<feature type="binding site" evidence="1">
    <location>
        <position position="223"/>
    </location>
    <ligand>
        <name>ATP</name>
        <dbReference type="ChEBI" id="CHEBI:30616"/>
    </ligand>
</feature>
<feature type="binding site" evidence="1">
    <location>
        <position position="315"/>
    </location>
    <ligand>
        <name>DNA</name>
        <dbReference type="ChEBI" id="CHEBI:16991"/>
    </ligand>
</feature>
<feature type="binding site" evidence="1">
    <location>
        <position position="320"/>
    </location>
    <ligand>
        <name>DNA</name>
        <dbReference type="ChEBI" id="CHEBI:16991"/>
    </ligand>
</feature>
<feature type="sequence conflict" description="In Ref. 1; AAA17098." evidence="2" ref="1">
    <original>MSEDYLDRDVSPALTVGEADIDVSLRP</original>
    <variation>MGRWQRPAPCGLLCRCWARPDERGLLGSGCFPGADRRRSRHRCQPAA</variation>
    <location>
        <begin position="1"/>
        <end position="27"/>
    </location>
</feature>
<organism>
    <name type="scientific">Mycobacterium leprae (strain TN)</name>
    <dbReference type="NCBI Taxonomy" id="272631"/>
    <lineage>
        <taxon>Bacteria</taxon>
        <taxon>Bacillati</taxon>
        <taxon>Actinomycetota</taxon>
        <taxon>Actinomycetes</taxon>
        <taxon>Mycobacteriales</taxon>
        <taxon>Mycobacteriaceae</taxon>
        <taxon>Mycobacterium</taxon>
    </lineage>
</organism>
<comment type="function">
    <text evidence="1">The RuvA-RuvB-RuvC complex processes Holliday junction (HJ) DNA during genetic recombination and DNA repair, while the RuvA-RuvB complex plays an important role in the rescue of blocked DNA replication forks via replication fork reversal (RFR). RuvA specifically binds to HJ cruciform DNA, conferring on it an open structure. The RuvB hexamer acts as an ATP-dependent pump, pulling dsDNA into and through the RuvAB complex. RuvB forms 2 homohexamers on either side of HJ DNA bound by 1 or 2 RuvA tetramers; 4 subunits per hexamer contact DNA at a time. Coordinated motions by a converter formed by DNA-disengaged RuvB subunits stimulates ATP hydrolysis and nucleotide exchange. Immobilization of the converter enables RuvB to convert the ATP-contained energy into a lever motion, pulling 2 nucleotides of DNA out of the RuvA tetramer per ATP hydrolyzed, thus driving DNA branch migration. The RuvB motors rotate together with the DNA substrate, which together with the progressing nucleotide cycle form the mechanistic basis for DNA recombination by continuous HJ branch migration. Branch migration allows RuvC to scan DNA until it finds its consensus sequence, where it cleaves and resolves cruciform DNA.</text>
</comment>
<comment type="catalytic activity">
    <reaction evidence="1">
        <text>ATP + H2O = ADP + phosphate + H(+)</text>
        <dbReference type="Rhea" id="RHEA:13065"/>
        <dbReference type="ChEBI" id="CHEBI:15377"/>
        <dbReference type="ChEBI" id="CHEBI:15378"/>
        <dbReference type="ChEBI" id="CHEBI:30616"/>
        <dbReference type="ChEBI" id="CHEBI:43474"/>
        <dbReference type="ChEBI" id="CHEBI:456216"/>
    </reaction>
</comment>
<comment type="subunit">
    <text evidence="1">Homohexamer. Forms an RuvA(8)-RuvB(12)-Holliday junction (HJ) complex. HJ DNA is sandwiched between 2 RuvA tetramers; dsDNA enters through RuvA and exits via RuvB. An RuvB hexamer assembles on each DNA strand where it exits the tetramer. Each RuvB hexamer is contacted by two RuvA subunits (via domain III) on 2 adjacent RuvB subunits; this complex drives branch migration. In the full resolvosome a probable DNA-RuvA(4)-RuvB(12)-RuvC(2) complex forms which resolves the HJ.</text>
</comment>
<comment type="subcellular location">
    <subcellularLocation>
        <location evidence="1">Cytoplasm</location>
    </subcellularLocation>
</comment>
<comment type="domain">
    <text evidence="1">Has 3 domains, the large (RuvB-L) and small ATPase (RuvB-S) domains and the C-terminal head (RuvB-H) domain. The head domain binds DNA, while the ATPase domains jointly bind ATP, ADP or are empty depending on the state of the subunit in the translocation cycle. During a single DNA translocation step the structure of each domain remains the same, but their relative positions change.</text>
</comment>
<comment type="similarity">
    <text evidence="1">Belongs to the RuvB family.</text>
</comment>
<protein>
    <recommendedName>
        <fullName evidence="1">Holliday junction branch migration complex subunit RuvB</fullName>
        <ecNumber evidence="1">3.6.4.-</ecNumber>
    </recommendedName>
</protein>
<accession>P40833</accession>
<gene>
    <name evidence="1" type="primary">ruvB</name>
    <name type="ordered locus">ML0483</name>
    <name type="ORF">B1177_C3_227</name>
</gene>
<dbReference type="EC" id="3.6.4.-" evidence="1"/>
<dbReference type="EMBL" id="U00011">
    <property type="protein sequence ID" value="AAA17098.1"/>
    <property type="molecule type" value="Genomic_DNA"/>
</dbReference>
<dbReference type="EMBL" id="AL583918">
    <property type="protein sequence ID" value="CAC29991.1"/>
    <property type="molecule type" value="Genomic_DNA"/>
</dbReference>
<dbReference type="PIR" id="C86969">
    <property type="entry name" value="C86969"/>
</dbReference>
<dbReference type="PIR" id="S72734">
    <property type="entry name" value="S72734"/>
</dbReference>
<dbReference type="RefSeq" id="NP_301423.1">
    <property type="nucleotide sequence ID" value="NC_002677.1"/>
</dbReference>
<dbReference type="RefSeq" id="WP_010907747.1">
    <property type="nucleotide sequence ID" value="NC_002677.1"/>
</dbReference>
<dbReference type="SMR" id="P40833"/>
<dbReference type="STRING" id="272631.gene:17574304"/>
<dbReference type="KEGG" id="mle:ML0483"/>
<dbReference type="PATRIC" id="fig|272631.5.peg.846"/>
<dbReference type="Leproma" id="ML0483"/>
<dbReference type="eggNOG" id="COG2255">
    <property type="taxonomic scope" value="Bacteria"/>
</dbReference>
<dbReference type="HOGENOM" id="CLU_055599_1_0_11"/>
<dbReference type="OrthoDB" id="9804478at2"/>
<dbReference type="Proteomes" id="UP000000806">
    <property type="component" value="Chromosome"/>
</dbReference>
<dbReference type="GO" id="GO:0005737">
    <property type="term" value="C:cytoplasm"/>
    <property type="evidence" value="ECO:0007669"/>
    <property type="project" value="UniProtKB-SubCell"/>
</dbReference>
<dbReference type="GO" id="GO:0048476">
    <property type="term" value="C:Holliday junction resolvase complex"/>
    <property type="evidence" value="ECO:0007669"/>
    <property type="project" value="UniProtKB-UniRule"/>
</dbReference>
<dbReference type="GO" id="GO:0005524">
    <property type="term" value="F:ATP binding"/>
    <property type="evidence" value="ECO:0007669"/>
    <property type="project" value="UniProtKB-UniRule"/>
</dbReference>
<dbReference type="GO" id="GO:0016887">
    <property type="term" value="F:ATP hydrolysis activity"/>
    <property type="evidence" value="ECO:0007669"/>
    <property type="project" value="InterPro"/>
</dbReference>
<dbReference type="GO" id="GO:0000400">
    <property type="term" value="F:four-way junction DNA binding"/>
    <property type="evidence" value="ECO:0007669"/>
    <property type="project" value="UniProtKB-UniRule"/>
</dbReference>
<dbReference type="GO" id="GO:0009378">
    <property type="term" value="F:four-way junction helicase activity"/>
    <property type="evidence" value="ECO:0007669"/>
    <property type="project" value="InterPro"/>
</dbReference>
<dbReference type="GO" id="GO:0006310">
    <property type="term" value="P:DNA recombination"/>
    <property type="evidence" value="ECO:0007669"/>
    <property type="project" value="UniProtKB-UniRule"/>
</dbReference>
<dbReference type="GO" id="GO:0006281">
    <property type="term" value="P:DNA repair"/>
    <property type="evidence" value="ECO:0007669"/>
    <property type="project" value="UniProtKB-UniRule"/>
</dbReference>
<dbReference type="CDD" id="cd00009">
    <property type="entry name" value="AAA"/>
    <property type="match status" value="1"/>
</dbReference>
<dbReference type="Gene3D" id="1.10.8.60">
    <property type="match status" value="1"/>
</dbReference>
<dbReference type="Gene3D" id="3.40.50.300">
    <property type="entry name" value="P-loop containing nucleotide triphosphate hydrolases"/>
    <property type="match status" value="1"/>
</dbReference>
<dbReference type="Gene3D" id="1.10.10.10">
    <property type="entry name" value="Winged helix-like DNA-binding domain superfamily/Winged helix DNA-binding domain"/>
    <property type="match status" value="1"/>
</dbReference>
<dbReference type="HAMAP" id="MF_00016">
    <property type="entry name" value="DNA_HJ_migration_RuvB"/>
    <property type="match status" value="1"/>
</dbReference>
<dbReference type="InterPro" id="IPR003593">
    <property type="entry name" value="AAA+_ATPase"/>
</dbReference>
<dbReference type="InterPro" id="IPR041445">
    <property type="entry name" value="AAA_lid_4"/>
</dbReference>
<dbReference type="InterPro" id="IPR004605">
    <property type="entry name" value="DNA_helicase_Holl-junc_RuvB"/>
</dbReference>
<dbReference type="InterPro" id="IPR027417">
    <property type="entry name" value="P-loop_NTPase"/>
</dbReference>
<dbReference type="InterPro" id="IPR008824">
    <property type="entry name" value="RuvB-like_N"/>
</dbReference>
<dbReference type="InterPro" id="IPR008823">
    <property type="entry name" value="RuvB_C"/>
</dbReference>
<dbReference type="InterPro" id="IPR036388">
    <property type="entry name" value="WH-like_DNA-bd_sf"/>
</dbReference>
<dbReference type="InterPro" id="IPR036390">
    <property type="entry name" value="WH_DNA-bd_sf"/>
</dbReference>
<dbReference type="NCBIfam" id="NF000868">
    <property type="entry name" value="PRK00080.1"/>
    <property type="match status" value="1"/>
</dbReference>
<dbReference type="NCBIfam" id="TIGR00635">
    <property type="entry name" value="ruvB"/>
    <property type="match status" value="1"/>
</dbReference>
<dbReference type="PANTHER" id="PTHR42848">
    <property type="match status" value="1"/>
</dbReference>
<dbReference type="PANTHER" id="PTHR42848:SF1">
    <property type="entry name" value="HOLLIDAY JUNCTION BRANCH MIGRATION COMPLEX SUBUNIT RUVB"/>
    <property type="match status" value="1"/>
</dbReference>
<dbReference type="Pfam" id="PF17864">
    <property type="entry name" value="AAA_lid_4"/>
    <property type="match status" value="1"/>
</dbReference>
<dbReference type="Pfam" id="PF05491">
    <property type="entry name" value="RuvB_C"/>
    <property type="match status" value="1"/>
</dbReference>
<dbReference type="Pfam" id="PF05496">
    <property type="entry name" value="RuvB_N"/>
    <property type="match status" value="1"/>
</dbReference>
<dbReference type="SMART" id="SM00382">
    <property type="entry name" value="AAA"/>
    <property type="match status" value="1"/>
</dbReference>
<dbReference type="SUPFAM" id="SSF52540">
    <property type="entry name" value="P-loop containing nucleoside triphosphate hydrolases"/>
    <property type="match status" value="1"/>
</dbReference>
<dbReference type="SUPFAM" id="SSF46785">
    <property type="entry name" value="Winged helix' DNA-binding domain"/>
    <property type="match status" value="1"/>
</dbReference>
<evidence type="ECO:0000255" key="1">
    <source>
        <dbReference type="HAMAP-Rule" id="MF_00016"/>
    </source>
</evidence>
<evidence type="ECO:0000305" key="2"/>